<organism>
    <name type="scientific">Dictyostelium discoideum</name>
    <name type="common">Social amoeba</name>
    <dbReference type="NCBI Taxonomy" id="44689"/>
    <lineage>
        <taxon>Eukaryota</taxon>
        <taxon>Amoebozoa</taxon>
        <taxon>Evosea</taxon>
        <taxon>Eumycetozoa</taxon>
        <taxon>Dictyostelia</taxon>
        <taxon>Dictyosteliales</taxon>
        <taxon>Dictyosteliaceae</taxon>
        <taxon>Dictyostelium</taxon>
    </lineage>
</organism>
<evidence type="ECO:0000256" key="1">
    <source>
        <dbReference type="SAM" id="MobiDB-lite"/>
    </source>
</evidence>
<evidence type="ECO:0000305" key="2"/>
<comment type="function">
    <text>Plays an important role in the elongation step of protein synthesis.</text>
</comment>
<comment type="subunit">
    <text>P1 and P2 exist as dimers at the large ribosomal subunit.</text>
</comment>
<comment type="PTM">
    <text>Phosphorylated.</text>
</comment>
<comment type="similarity">
    <text evidence="2">Belongs to the eukaryotic ribosomal protein P1/P2 family.</text>
</comment>
<proteinExistence type="evidence at protein level"/>
<protein>
    <recommendedName>
        <fullName evidence="2">Large ribosomal subunit protein P2</fullName>
    </recommendedName>
    <alternativeName>
        <fullName>60S acidic ribosomal protein P2</fullName>
    </alternativeName>
</protein>
<dbReference type="EMBL" id="X56192">
    <property type="protein sequence ID" value="CAA39655.1"/>
    <property type="molecule type" value="mRNA"/>
</dbReference>
<dbReference type="EMBL" id="AAFI02000055">
    <property type="protein sequence ID" value="EAL65681.1"/>
    <property type="molecule type" value="Genomic_DNA"/>
</dbReference>
<dbReference type="PIR" id="S14014">
    <property type="entry name" value="R6DOP2"/>
</dbReference>
<dbReference type="RefSeq" id="XP_639052.1">
    <property type="nucleotide sequence ID" value="XM_633960.1"/>
</dbReference>
<dbReference type="SMR" id="P22683"/>
<dbReference type="FunCoup" id="P22683">
    <property type="interactions" value="334"/>
</dbReference>
<dbReference type="STRING" id="44689.P22683"/>
<dbReference type="PaxDb" id="44689-DDB0191484"/>
<dbReference type="EnsemblProtists" id="EAL65681">
    <property type="protein sequence ID" value="EAL65681"/>
    <property type="gene ID" value="DDB_G0283393"/>
</dbReference>
<dbReference type="GeneID" id="8624077"/>
<dbReference type="KEGG" id="ddi:DDB_G0283393"/>
<dbReference type="dictyBase" id="DDB_G0283393">
    <property type="gene designation" value="rplP2"/>
</dbReference>
<dbReference type="eggNOG" id="KOG3449">
    <property type="taxonomic scope" value="Eukaryota"/>
</dbReference>
<dbReference type="HOGENOM" id="CLU_114656_0_2_1"/>
<dbReference type="InParanoid" id="P22683"/>
<dbReference type="OMA" id="DIMAQGI"/>
<dbReference type="Reactome" id="R-DDI-156827">
    <property type="pathway name" value="L13a-mediated translational silencing of Ceruloplasmin expression"/>
</dbReference>
<dbReference type="Reactome" id="R-DDI-1799339">
    <property type="pathway name" value="SRP-dependent cotranslational protein targeting to membrane"/>
</dbReference>
<dbReference type="Reactome" id="R-DDI-72689">
    <property type="pathway name" value="Formation of a pool of free 40S subunits"/>
</dbReference>
<dbReference type="Reactome" id="R-DDI-72706">
    <property type="pathway name" value="GTP hydrolysis and joining of the 60S ribosomal subunit"/>
</dbReference>
<dbReference type="Reactome" id="R-DDI-975956">
    <property type="pathway name" value="Nonsense Mediated Decay (NMD) independent of the Exon Junction Complex (EJC)"/>
</dbReference>
<dbReference type="Reactome" id="R-DDI-975957">
    <property type="pathway name" value="Nonsense Mediated Decay (NMD) enhanced by the Exon Junction Complex (EJC)"/>
</dbReference>
<dbReference type="PRO" id="PR:P22683"/>
<dbReference type="Proteomes" id="UP000002195">
    <property type="component" value="Chromosome 4"/>
</dbReference>
<dbReference type="GO" id="GO:0022625">
    <property type="term" value="C:cytosolic large ribosomal subunit"/>
    <property type="evidence" value="ECO:0007669"/>
    <property type="project" value="InterPro"/>
</dbReference>
<dbReference type="GO" id="GO:0031012">
    <property type="term" value="C:extracellular matrix"/>
    <property type="evidence" value="ECO:0007005"/>
    <property type="project" value="dictyBase"/>
</dbReference>
<dbReference type="GO" id="GO:0003735">
    <property type="term" value="F:structural constituent of ribosome"/>
    <property type="evidence" value="ECO:0007669"/>
    <property type="project" value="InterPro"/>
</dbReference>
<dbReference type="GO" id="GO:0002182">
    <property type="term" value="P:cytoplasmic translational elongation"/>
    <property type="evidence" value="ECO:0007669"/>
    <property type="project" value="InterPro"/>
</dbReference>
<dbReference type="CDD" id="cd05833">
    <property type="entry name" value="Ribosomal_P2"/>
    <property type="match status" value="1"/>
</dbReference>
<dbReference type="FunFam" id="1.10.10.1410:FF:000002">
    <property type="entry name" value="60S acidic ribosomal protein P2"/>
    <property type="match status" value="1"/>
</dbReference>
<dbReference type="Gene3D" id="1.10.10.1410">
    <property type="match status" value="1"/>
</dbReference>
<dbReference type="HAMAP" id="MF_01478">
    <property type="entry name" value="Ribosomal_L12_arch"/>
    <property type="match status" value="1"/>
</dbReference>
<dbReference type="InterPro" id="IPR038716">
    <property type="entry name" value="P1/P2_N_sf"/>
</dbReference>
<dbReference type="InterPro" id="IPR027534">
    <property type="entry name" value="Ribosomal_P1/P2"/>
</dbReference>
<dbReference type="InterPro" id="IPR044076">
    <property type="entry name" value="Ribosomal_P2"/>
</dbReference>
<dbReference type="PANTHER" id="PTHR21141">
    <property type="entry name" value="60S ACIDIC RIBOSOMAL PROTEIN FAMILY MEMBER"/>
    <property type="match status" value="1"/>
</dbReference>
<dbReference type="PANTHER" id="PTHR21141:SF5">
    <property type="entry name" value="LARGE RIBOSOMAL SUBUNIT PROTEIN P2"/>
    <property type="match status" value="1"/>
</dbReference>
<dbReference type="Pfam" id="PF00428">
    <property type="entry name" value="Ribosomal_60s"/>
    <property type="match status" value="1"/>
</dbReference>
<name>RLA2_DICDI</name>
<reference key="1">
    <citation type="journal article" date="1991" name="Nucleic Acids Res.">
        <title>Nucleotide sequence of a cDNA encoding acidic ribosomal phosphoprotein P2 in Dictyostelium discoideum.</title>
        <authorList>
            <person name="Prieto J."/>
            <person name="Candel E."/>
            <person name="Coloma A."/>
        </authorList>
    </citation>
    <scope>NUCLEOTIDE SEQUENCE [MRNA]</scope>
    <scope>PARTIAL PROTEIN SEQUENCE</scope>
    <source>
        <strain>AX3</strain>
    </source>
</reference>
<reference key="2">
    <citation type="journal article" date="2005" name="Nature">
        <title>The genome of the social amoeba Dictyostelium discoideum.</title>
        <authorList>
            <person name="Eichinger L."/>
            <person name="Pachebat J.A."/>
            <person name="Gloeckner G."/>
            <person name="Rajandream M.A."/>
            <person name="Sucgang R."/>
            <person name="Berriman M."/>
            <person name="Song J."/>
            <person name="Olsen R."/>
            <person name="Szafranski K."/>
            <person name="Xu Q."/>
            <person name="Tunggal B."/>
            <person name="Kummerfeld S."/>
            <person name="Madera M."/>
            <person name="Konfortov B.A."/>
            <person name="Rivero F."/>
            <person name="Bankier A.T."/>
            <person name="Lehmann R."/>
            <person name="Hamlin N."/>
            <person name="Davies R."/>
            <person name="Gaudet P."/>
            <person name="Fey P."/>
            <person name="Pilcher K."/>
            <person name="Chen G."/>
            <person name="Saunders D."/>
            <person name="Sodergren E.J."/>
            <person name="Davis P."/>
            <person name="Kerhornou A."/>
            <person name="Nie X."/>
            <person name="Hall N."/>
            <person name="Anjard C."/>
            <person name="Hemphill L."/>
            <person name="Bason N."/>
            <person name="Farbrother P."/>
            <person name="Desany B."/>
            <person name="Just E."/>
            <person name="Morio T."/>
            <person name="Rost R."/>
            <person name="Churcher C.M."/>
            <person name="Cooper J."/>
            <person name="Haydock S."/>
            <person name="van Driessche N."/>
            <person name="Cronin A."/>
            <person name="Goodhead I."/>
            <person name="Muzny D.M."/>
            <person name="Mourier T."/>
            <person name="Pain A."/>
            <person name="Lu M."/>
            <person name="Harper D."/>
            <person name="Lindsay R."/>
            <person name="Hauser H."/>
            <person name="James K.D."/>
            <person name="Quiles M."/>
            <person name="Madan Babu M."/>
            <person name="Saito T."/>
            <person name="Buchrieser C."/>
            <person name="Wardroper A."/>
            <person name="Felder M."/>
            <person name="Thangavelu M."/>
            <person name="Johnson D."/>
            <person name="Knights A."/>
            <person name="Loulseged H."/>
            <person name="Mungall K.L."/>
            <person name="Oliver K."/>
            <person name="Price C."/>
            <person name="Quail M.A."/>
            <person name="Urushihara H."/>
            <person name="Hernandez J."/>
            <person name="Rabbinowitsch E."/>
            <person name="Steffen D."/>
            <person name="Sanders M."/>
            <person name="Ma J."/>
            <person name="Kohara Y."/>
            <person name="Sharp S."/>
            <person name="Simmonds M.N."/>
            <person name="Spiegler S."/>
            <person name="Tivey A."/>
            <person name="Sugano S."/>
            <person name="White B."/>
            <person name="Walker D."/>
            <person name="Woodward J.R."/>
            <person name="Winckler T."/>
            <person name="Tanaka Y."/>
            <person name="Shaulsky G."/>
            <person name="Schleicher M."/>
            <person name="Weinstock G.M."/>
            <person name="Rosenthal A."/>
            <person name="Cox E.C."/>
            <person name="Chisholm R.L."/>
            <person name="Gibbs R.A."/>
            <person name="Loomis W.F."/>
            <person name="Platzer M."/>
            <person name="Kay R.R."/>
            <person name="Williams J.G."/>
            <person name="Dear P.H."/>
            <person name="Noegel A.A."/>
            <person name="Barrell B.G."/>
            <person name="Kuspa A."/>
        </authorList>
    </citation>
    <scope>NUCLEOTIDE SEQUENCE [LARGE SCALE GENOMIC DNA]</scope>
    <source>
        <strain>AX4</strain>
    </source>
</reference>
<sequence>MKYLAAYLLASLSGNANAASVTKILQSVGVEVDAARVESVCKELDGKDVQALIAAGKSKVGSVAAAAAPAAATSAAPAAAAAAPAKKVVEEKKEESDDDMGMGLFD</sequence>
<feature type="initiator methionine" description="Removed">
    <location>
        <position position="1"/>
    </location>
</feature>
<feature type="chain" id="PRO_0000157651" description="Large ribosomal subunit protein P2">
    <location>
        <begin position="2"/>
        <end position="106"/>
    </location>
</feature>
<feature type="region of interest" description="Disordered" evidence="1">
    <location>
        <begin position="80"/>
        <end position="106"/>
    </location>
</feature>
<gene>
    <name type="primary">rplp2</name>
    <name type="ORF">DDB_G0283393</name>
</gene>
<keyword id="KW-0903">Direct protein sequencing</keyword>
<keyword id="KW-0597">Phosphoprotein</keyword>
<keyword id="KW-1185">Reference proteome</keyword>
<keyword id="KW-0687">Ribonucleoprotein</keyword>
<keyword id="KW-0689">Ribosomal protein</keyword>
<accession>P22683</accession>
<accession>Q54R39</accession>